<keyword id="KW-0175">Coiled coil</keyword>
<keyword id="KW-0539">Nucleus</keyword>
<keyword id="KW-1185">Reference proteome</keyword>
<keyword id="KW-0677">Repeat</keyword>
<keyword id="KW-0853">WD repeat</keyword>
<reference key="1">
    <citation type="journal article" date="2004" name="Proc. Natl. Acad. Sci. U.S.A.">
        <title>Hematopoietic gene expression profile in zebrafish kidney marrow.</title>
        <authorList>
            <person name="Song H.-D."/>
            <person name="Sun X.-J."/>
            <person name="Deng M."/>
            <person name="Zhang G.-W."/>
            <person name="Zhou Y."/>
            <person name="Wu X.-Y."/>
            <person name="Sheng Y."/>
            <person name="Chen Y."/>
            <person name="Ruan Z."/>
            <person name="Jiang C.-L."/>
            <person name="Fan H.-Y."/>
            <person name="Zon L.I."/>
            <person name="Kanki J.P."/>
            <person name="Liu T.X."/>
            <person name="Look A.T."/>
            <person name="Chen Z."/>
        </authorList>
    </citation>
    <scope>NUCLEOTIDE SEQUENCE [LARGE SCALE MRNA]</scope>
    <source>
        <tissue>Kidney marrow</tissue>
    </source>
</reference>
<reference key="2">
    <citation type="submission" date="2003-02" db="EMBL/GenBank/DDBJ databases">
        <authorList>
            <consortium name="NIH - Zebrafish Gene Collection (ZGC) project"/>
        </authorList>
    </citation>
    <scope>NUCLEOTIDE SEQUENCE [LARGE SCALE MRNA]</scope>
    <source>
        <strain>AB</strain>
    </source>
</reference>
<evidence type="ECO:0000250" key="1"/>
<evidence type="ECO:0000255" key="2"/>
<evidence type="ECO:0000256" key="3">
    <source>
        <dbReference type="SAM" id="MobiDB-lite"/>
    </source>
</evidence>
<evidence type="ECO:0000305" key="4"/>
<dbReference type="EMBL" id="AY391425">
    <property type="protein sequence ID" value="AAQ91237.1"/>
    <property type="molecule type" value="mRNA"/>
</dbReference>
<dbReference type="EMBL" id="BC047174">
    <property type="protein sequence ID" value="AAH47174.1"/>
    <property type="molecule type" value="mRNA"/>
</dbReference>
<dbReference type="RefSeq" id="NP_956531.1">
    <property type="nucleotide sequence ID" value="NM_200237.1"/>
</dbReference>
<dbReference type="SMR" id="Q802W4"/>
<dbReference type="FunCoup" id="Q802W4">
    <property type="interactions" value="2739"/>
</dbReference>
<dbReference type="STRING" id="7955.ENSDARP00000018924"/>
<dbReference type="PaxDb" id="7955-ENSDARP00000018924"/>
<dbReference type="GeneID" id="393206"/>
<dbReference type="KEGG" id="dre:393206"/>
<dbReference type="AGR" id="ZFIN:ZDB-GENE-040426-764"/>
<dbReference type="CTD" id="79954"/>
<dbReference type="ZFIN" id="ZDB-GENE-040426-764">
    <property type="gene designation" value="nol10"/>
</dbReference>
<dbReference type="eggNOG" id="KOG2321">
    <property type="taxonomic scope" value="Eukaryota"/>
</dbReference>
<dbReference type="InParanoid" id="Q802W4"/>
<dbReference type="OrthoDB" id="273340at2759"/>
<dbReference type="PhylomeDB" id="Q802W4"/>
<dbReference type="PRO" id="PR:Q802W4"/>
<dbReference type="Proteomes" id="UP000000437">
    <property type="component" value="Chromosome 17"/>
</dbReference>
<dbReference type="GO" id="GO:0005730">
    <property type="term" value="C:nucleolus"/>
    <property type="evidence" value="ECO:0000318"/>
    <property type="project" value="GO_Central"/>
</dbReference>
<dbReference type="GO" id="GO:0032040">
    <property type="term" value="C:small-subunit processome"/>
    <property type="evidence" value="ECO:0000318"/>
    <property type="project" value="GO_Central"/>
</dbReference>
<dbReference type="GO" id="GO:0000462">
    <property type="term" value="P:maturation of SSU-rRNA from tricistronic rRNA transcript (SSU-rRNA, 5.8S rRNA, LSU-rRNA)"/>
    <property type="evidence" value="ECO:0000318"/>
    <property type="project" value="GO_Central"/>
</dbReference>
<dbReference type="FunFam" id="2.130.10.10:FF:001909">
    <property type="entry name" value="WD repeat, SAM and U-box domain-containing protein"/>
    <property type="match status" value="1"/>
</dbReference>
<dbReference type="Gene3D" id="2.130.10.10">
    <property type="entry name" value="YVTN repeat-like/Quinoprotein amine dehydrogenase"/>
    <property type="match status" value="1"/>
</dbReference>
<dbReference type="InterPro" id="IPR056551">
    <property type="entry name" value="Beta-prop_NOL10_N"/>
</dbReference>
<dbReference type="InterPro" id="IPR040382">
    <property type="entry name" value="NOL10/Enp2"/>
</dbReference>
<dbReference type="InterPro" id="IPR056550">
    <property type="entry name" value="NOL10_2nd"/>
</dbReference>
<dbReference type="InterPro" id="IPR012580">
    <property type="entry name" value="NUC153"/>
</dbReference>
<dbReference type="InterPro" id="IPR011047">
    <property type="entry name" value="Quinoprotein_ADH-like_sf"/>
</dbReference>
<dbReference type="InterPro" id="IPR015943">
    <property type="entry name" value="WD40/YVTN_repeat-like_dom_sf"/>
</dbReference>
<dbReference type="InterPro" id="IPR001680">
    <property type="entry name" value="WD40_rpt"/>
</dbReference>
<dbReference type="PANTHER" id="PTHR14927">
    <property type="entry name" value="NUCLEOLAR PROTEIN 10"/>
    <property type="match status" value="1"/>
</dbReference>
<dbReference type="PANTHER" id="PTHR14927:SF0">
    <property type="entry name" value="NUCLEOLAR PROTEIN 10"/>
    <property type="match status" value="1"/>
</dbReference>
<dbReference type="Pfam" id="PF23098">
    <property type="entry name" value="Beta-prop_NOL10_N"/>
    <property type="match status" value="1"/>
</dbReference>
<dbReference type="Pfam" id="PF23097">
    <property type="entry name" value="NOL10_2nd"/>
    <property type="match status" value="1"/>
</dbReference>
<dbReference type="Pfam" id="PF08159">
    <property type="entry name" value="NUC153"/>
    <property type="match status" value="1"/>
</dbReference>
<dbReference type="SMART" id="SM00320">
    <property type="entry name" value="WD40"/>
    <property type="match status" value="5"/>
</dbReference>
<dbReference type="SUPFAM" id="SSF50998">
    <property type="entry name" value="Quinoprotein alcohol dehydrogenase-like"/>
    <property type="match status" value="1"/>
</dbReference>
<feature type="chain" id="PRO_0000051104" description="Nucleolar protein 10">
    <location>
        <begin position="1"/>
        <end position="722"/>
    </location>
</feature>
<feature type="repeat" description="WD 1">
    <location>
        <begin position="50"/>
        <end position="90"/>
    </location>
</feature>
<feature type="repeat" description="WD 2">
    <location>
        <begin position="174"/>
        <end position="213"/>
    </location>
</feature>
<feature type="repeat" description="WD 3">
    <location>
        <begin position="228"/>
        <end position="266"/>
    </location>
</feature>
<feature type="repeat" description="WD 4">
    <location>
        <begin position="270"/>
        <end position="308"/>
    </location>
</feature>
<feature type="repeat" description="WD 5">
    <location>
        <begin position="310"/>
        <end position="349"/>
    </location>
</feature>
<feature type="region of interest" description="Disordered" evidence="3">
    <location>
        <begin position="521"/>
        <end position="555"/>
    </location>
</feature>
<feature type="region of interest" description="Disordered" evidence="3">
    <location>
        <begin position="572"/>
        <end position="607"/>
    </location>
</feature>
<feature type="region of interest" description="Disordered" evidence="3">
    <location>
        <begin position="616"/>
        <end position="635"/>
    </location>
</feature>
<feature type="region of interest" description="Disordered" evidence="3">
    <location>
        <begin position="664"/>
        <end position="722"/>
    </location>
</feature>
<feature type="coiled-coil region" evidence="2">
    <location>
        <begin position="423"/>
        <end position="476"/>
    </location>
</feature>
<feature type="coiled-coil region" evidence="2">
    <location>
        <begin position="511"/>
        <end position="534"/>
    </location>
</feature>
<feature type="coiled-coil region" evidence="2">
    <location>
        <begin position="620"/>
        <end position="681"/>
    </location>
</feature>
<feature type="compositionally biased region" description="Acidic residues" evidence="3">
    <location>
        <begin position="523"/>
        <end position="534"/>
    </location>
</feature>
<feature type="compositionally biased region" description="Basic and acidic residues" evidence="3">
    <location>
        <begin position="572"/>
        <end position="586"/>
    </location>
</feature>
<feature type="compositionally biased region" description="Polar residues" evidence="3">
    <location>
        <begin position="587"/>
        <end position="600"/>
    </location>
</feature>
<feature type="compositionally biased region" description="Basic and acidic residues" evidence="3">
    <location>
        <begin position="664"/>
        <end position="682"/>
    </location>
</feature>
<feature type="compositionally biased region" description="Basic residues" evidence="3">
    <location>
        <begin position="683"/>
        <end position="693"/>
    </location>
</feature>
<feature type="compositionally biased region" description="Basic residues" evidence="3">
    <location>
        <begin position="702"/>
        <end position="722"/>
    </location>
</feature>
<feature type="sequence conflict" description="In Ref. 1; AAQ91237." evidence="4" ref="1">
    <original>E</original>
    <variation>K</variation>
    <location>
        <position position="197"/>
    </location>
</feature>
<feature type="sequence conflict" description="In Ref. 1; AAQ91237." evidence="4" ref="1">
    <original>VAA</original>
    <variation>AAV</variation>
    <location>
        <begin position="211"/>
        <end position="213"/>
    </location>
</feature>
<feature type="sequence conflict" description="In Ref. 1; AAQ91237." evidence="4" ref="1">
    <original>D</original>
    <variation>E</variation>
    <location>
        <position position="240"/>
    </location>
</feature>
<feature type="sequence conflict" description="In Ref. 1; AAQ91237." evidence="4" ref="1">
    <original>R</original>
    <variation>H</variation>
    <location>
        <position position="378"/>
    </location>
</feature>
<feature type="sequence conflict" description="In Ref. 1; AAQ91237." evidence="4" ref="1">
    <original>K</original>
    <variation>Q</variation>
    <location>
        <position position="603"/>
    </location>
</feature>
<feature type="sequence conflict" description="In Ref. 1; AAQ91237." evidence="4" ref="1">
    <original>G</original>
    <variation>R</variation>
    <location>
        <position position="703"/>
    </location>
</feature>
<feature type="sequence conflict" description="In Ref. 1; AAQ91237." evidence="4" ref="1">
    <original>G</original>
    <variation>D</variation>
    <location>
        <position position="709"/>
    </location>
</feature>
<proteinExistence type="evidence at transcript level"/>
<accession>Q802W4</accession>
<accession>Q6TNU2</accession>
<comment type="subcellular location">
    <subcellularLocation>
        <location evidence="1">Nucleus</location>
        <location evidence="1">Nucleolus</location>
    </subcellularLocation>
</comment>
<comment type="similarity">
    <text evidence="4">Belongs to the WD repeat NOL10/ENP2 family.</text>
</comment>
<sequence length="722" mass="83581">MQVSSVNNVKIYNLSHGKSLPEWLSDRKKRVLQKKDVDIQRRIELIQDFEMPTVCTSIRVSRDGQYILAAGTYKPRVRCYDTYQLSLKFERCLDSDVVTFDILSDDYSKLVFLHIDRYVEFHSQHGHYYKTRIPKFGRDFSYHSPSCDLYFVGASSEVFRLNLEQGRFLNSLQTDAAEMNVCDINPVHQLFAAGTLEGRVDCWDPRVRTRVAALDCALSSITDNTEVEGLPSVSALKFNDSLGLAVGTSTGQILVYDLRSSRPLLVKDHYYGLPIKSLHFHNSLDLVLSADSKIIKMWNKDNGKVFSSIEPQANINDVCLYPASGMLFTANEDPKMNTFYIPALGPAPRWCSFLDNLTEELEENPESTIYDDYKFVTRKDLESLGLAHLIGSPLLRAYMHGFFMDIRLYHKVKTMVNPFAYEEYRKDKIRQKIEESRAQRVQLKKLPKVNKELALKLMEEDTELTNKKKKKKANVAGNLLMDDRFKVMFENPDYQVDERSEEFRLLNPIISNVAERRRKSLLEEEQEQAEEEQEPEGRGSSEDDSSDEDDKGWVQEVREQRRLLRMEERERSYIQRQERRQQDRNTRLQSSDTHTQQSHGAQKPRFYQIKSGEEFRSFSDVSRKQKTHKASLEERLQRLEKSDTLSLNDTAVGSKQLTFTLKKTEKQRFQQQAERDHHEERRRIRRSAGHLHSNRGGGRGRGGGRGRGGGRGRGGGRGRRPF</sequence>
<name>NOL10_DANRE</name>
<protein>
    <recommendedName>
        <fullName>Nucleolar protein 10</fullName>
    </recommendedName>
</protein>
<organism>
    <name type="scientific">Danio rerio</name>
    <name type="common">Zebrafish</name>
    <name type="synonym">Brachydanio rerio</name>
    <dbReference type="NCBI Taxonomy" id="7955"/>
    <lineage>
        <taxon>Eukaryota</taxon>
        <taxon>Metazoa</taxon>
        <taxon>Chordata</taxon>
        <taxon>Craniata</taxon>
        <taxon>Vertebrata</taxon>
        <taxon>Euteleostomi</taxon>
        <taxon>Actinopterygii</taxon>
        <taxon>Neopterygii</taxon>
        <taxon>Teleostei</taxon>
        <taxon>Ostariophysi</taxon>
        <taxon>Cypriniformes</taxon>
        <taxon>Danionidae</taxon>
        <taxon>Danioninae</taxon>
        <taxon>Danio</taxon>
    </lineage>
</organism>
<gene>
    <name type="primary">nol10</name>
    <name type="ORF">zgc:55626</name>
</gene>